<protein>
    <recommendedName>
        <fullName evidence="2">Formamidopyrimidine-DNA glycosylase</fullName>
        <shortName evidence="2">Fapy-DNA glycosylase</shortName>
        <ecNumber evidence="2">3.2.2.23</ecNumber>
    </recommendedName>
    <alternativeName>
        <fullName evidence="2">DNA-(apurinic or apyrimidinic site) lyase MutM</fullName>
        <shortName evidence="2">AP lyase MutM</shortName>
        <ecNumber evidence="2">4.2.99.18</ecNumber>
    </alternativeName>
</protein>
<organism>
    <name type="scientific">Acaryochloris marina (strain MBIC 11017)</name>
    <dbReference type="NCBI Taxonomy" id="329726"/>
    <lineage>
        <taxon>Bacteria</taxon>
        <taxon>Bacillati</taxon>
        <taxon>Cyanobacteriota</taxon>
        <taxon>Cyanophyceae</taxon>
        <taxon>Acaryochloridales</taxon>
        <taxon>Acaryochloridaceae</taxon>
        <taxon>Acaryochloris</taxon>
    </lineage>
</organism>
<dbReference type="EC" id="3.2.2.23" evidence="2"/>
<dbReference type="EC" id="4.2.99.18" evidence="2"/>
<dbReference type="EMBL" id="CP000828">
    <property type="protein sequence ID" value="ABW27510.1"/>
    <property type="molecule type" value="Genomic_DNA"/>
</dbReference>
<dbReference type="RefSeq" id="WP_012162970.1">
    <property type="nucleotide sequence ID" value="NC_009925.1"/>
</dbReference>
<dbReference type="SMR" id="B0C5D4"/>
<dbReference type="STRING" id="329726.AM1_2501"/>
<dbReference type="KEGG" id="amr:AM1_2501"/>
<dbReference type="eggNOG" id="COG0266">
    <property type="taxonomic scope" value="Bacteria"/>
</dbReference>
<dbReference type="HOGENOM" id="CLU_038423_1_2_3"/>
<dbReference type="OrthoDB" id="9800855at2"/>
<dbReference type="Proteomes" id="UP000000268">
    <property type="component" value="Chromosome"/>
</dbReference>
<dbReference type="GO" id="GO:0034039">
    <property type="term" value="F:8-oxo-7,8-dihydroguanine DNA N-glycosylase activity"/>
    <property type="evidence" value="ECO:0007669"/>
    <property type="project" value="TreeGrafter"/>
</dbReference>
<dbReference type="GO" id="GO:0140078">
    <property type="term" value="F:class I DNA-(apurinic or apyrimidinic site) endonuclease activity"/>
    <property type="evidence" value="ECO:0007669"/>
    <property type="project" value="UniProtKB-EC"/>
</dbReference>
<dbReference type="GO" id="GO:0003684">
    <property type="term" value="F:damaged DNA binding"/>
    <property type="evidence" value="ECO:0007669"/>
    <property type="project" value="InterPro"/>
</dbReference>
<dbReference type="GO" id="GO:0008270">
    <property type="term" value="F:zinc ion binding"/>
    <property type="evidence" value="ECO:0007669"/>
    <property type="project" value="UniProtKB-UniRule"/>
</dbReference>
<dbReference type="GO" id="GO:0006284">
    <property type="term" value="P:base-excision repair"/>
    <property type="evidence" value="ECO:0007669"/>
    <property type="project" value="InterPro"/>
</dbReference>
<dbReference type="CDD" id="cd08966">
    <property type="entry name" value="EcFpg-like_N"/>
    <property type="match status" value="1"/>
</dbReference>
<dbReference type="FunFam" id="1.10.8.50:FF:000003">
    <property type="entry name" value="Formamidopyrimidine-DNA glycosylase"/>
    <property type="match status" value="1"/>
</dbReference>
<dbReference type="Gene3D" id="1.10.8.50">
    <property type="match status" value="1"/>
</dbReference>
<dbReference type="Gene3D" id="3.20.190.10">
    <property type="entry name" value="MutM-like, N-terminal"/>
    <property type="match status" value="1"/>
</dbReference>
<dbReference type="HAMAP" id="MF_00103">
    <property type="entry name" value="Fapy_DNA_glycosyl"/>
    <property type="match status" value="1"/>
</dbReference>
<dbReference type="InterPro" id="IPR015886">
    <property type="entry name" value="DNA_glyclase/AP_lyase_DNA-bd"/>
</dbReference>
<dbReference type="InterPro" id="IPR015887">
    <property type="entry name" value="DNA_glyclase_Znf_dom_DNA_BS"/>
</dbReference>
<dbReference type="InterPro" id="IPR020629">
    <property type="entry name" value="Formamido-pyr_DNA_Glyclase"/>
</dbReference>
<dbReference type="InterPro" id="IPR012319">
    <property type="entry name" value="FPG_cat"/>
</dbReference>
<dbReference type="InterPro" id="IPR035937">
    <property type="entry name" value="MutM-like_N-ter"/>
</dbReference>
<dbReference type="InterPro" id="IPR010979">
    <property type="entry name" value="Ribosomal_uS13-like_H2TH"/>
</dbReference>
<dbReference type="InterPro" id="IPR000214">
    <property type="entry name" value="Znf_DNA_glyclase/AP_lyase"/>
</dbReference>
<dbReference type="InterPro" id="IPR010663">
    <property type="entry name" value="Znf_FPG/IleRS"/>
</dbReference>
<dbReference type="NCBIfam" id="TIGR00577">
    <property type="entry name" value="fpg"/>
    <property type="match status" value="1"/>
</dbReference>
<dbReference type="NCBIfam" id="NF002211">
    <property type="entry name" value="PRK01103.1"/>
    <property type="match status" value="1"/>
</dbReference>
<dbReference type="NCBIfam" id="NF010551">
    <property type="entry name" value="PRK13945.1"/>
    <property type="match status" value="1"/>
</dbReference>
<dbReference type="PANTHER" id="PTHR22993">
    <property type="entry name" value="FORMAMIDOPYRIMIDINE-DNA GLYCOSYLASE"/>
    <property type="match status" value="1"/>
</dbReference>
<dbReference type="PANTHER" id="PTHR22993:SF9">
    <property type="entry name" value="FORMAMIDOPYRIMIDINE-DNA GLYCOSYLASE"/>
    <property type="match status" value="1"/>
</dbReference>
<dbReference type="Pfam" id="PF01149">
    <property type="entry name" value="Fapy_DNA_glyco"/>
    <property type="match status" value="1"/>
</dbReference>
<dbReference type="Pfam" id="PF06831">
    <property type="entry name" value="H2TH"/>
    <property type="match status" value="1"/>
</dbReference>
<dbReference type="Pfam" id="PF06827">
    <property type="entry name" value="zf-FPG_IleRS"/>
    <property type="match status" value="1"/>
</dbReference>
<dbReference type="SMART" id="SM00898">
    <property type="entry name" value="Fapy_DNA_glyco"/>
    <property type="match status" value="1"/>
</dbReference>
<dbReference type="SMART" id="SM01232">
    <property type="entry name" value="H2TH"/>
    <property type="match status" value="1"/>
</dbReference>
<dbReference type="SUPFAM" id="SSF57716">
    <property type="entry name" value="Glucocorticoid receptor-like (DNA-binding domain)"/>
    <property type="match status" value="1"/>
</dbReference>
<dbReference type="SUPFAM" id="SSF81624">
    <property type="entry name" value="N-terminal domain of MutM-like DNA repair proteins"/>
    <property type="match status" value="1"/>
</dbReference>
<dbReference type="SUPFAM" id="SSF46946">
    <property type="entry name" value="S13-like H2TH domain"/>
    <property type="match status" value="1"/>
</dbReference>
<dbReference type="PROSITE" id="PS51068">
    <property type="entry name" value="FPG_CAT"/>
    <property type="match status" value="1"/>
</dbReference>
<dbReference type="PROSITE" id="PS01242">
    <property type="entry name" value="ZF_FPG_1"/>
    <property type="match status" value="1"/>
</dbReference>
<dbReference type="PROSITE" id="PS51066">
    <property type="entry name" value="ZF_FPG_2"/>
    <property type="match status" value="1"/>
</dbReference>
<reference key="1">
    <citation type="journal article" date="2008" name="Proc. Natl. Acad. Sci. U.S.A.">
        <title>Niche adaptation and genome expansion in the chlorophyll d-producing cyanobacterium Acaryochloris marina.</title>
        <authorList>
            <person name="Swingley W.D."/>
            <person name="Chen M."/>
            <person name="Cheung P.C."/>
            <person name="Conrad A.L."/>
            <person name="Dejesa L.C."/>
            <person name="Hao J."/>
            <person name="Honchak B.M."/>
            <person name="Karbach L.E."/>
            <person name="Kurdoglu A."/>
            <person name="Lahiri S."/>
            <person name="Mastrian S.D."/>
            <person name="Miyashita H."/>
            <person name="Page L."/>
            <person name="Ramakrishna P."/>
            <person name="Satoh S."/>
            <person name="Sattley W.M."/>
            <person name="Shimada Y."/>
            <person name="Taylor H.L."/>
            <person name="Tomo T."/>
            <person name="Tsuchiya T."/>
            <person name="Wang Z.T."/>
            <person name="Raymond J."/>
            <person name="Mimuro M."/>
            <person name="Blankenship R.E."/>
            <person name="Touchman J.W."/>
        </authorList>
    </citation>
    <scope>NUCLEOTIDE SEQUENCE [LARGE SCALE GENOMIC DNA]</scope>
    <source>
        <strain>MBIC 11017</strain>
    </source>
</reference>
<gene>
    <name evidence="2" type="primary">mutM</name>
    <name evidence="2" type="synonym">fpg</name>
    <name type="ordered locus">AM1_2501</name>
</gene>
<keyword id="KW-0227">DNA damage</keyword>
<keyword id="KW-0234">DNA repair</keyword>
<keyword id="KW-0238">DNA-binding</keyword>
<keyword id="KW-0326">Glycosidase</keyword>
<keyword id="KW-0378">Hydrolase</keyword>
<keyword id="KW-0456">Lyase</keyword>
<keyword id="KW-0479">Metal-binding</keyword>
<keyword id="KW-0511">Multifunctional enzyme</keyword>
<keyword id="KW-1185">Reference proteome</keyword>
<keyword id="KW-0862">Zinc</keyword>
<keyword id="KW-0863">Zinc-finger</keyword>
<name>FPG_ACAM1</name>
<accession>B0C5D4</accession>
<evidence type="ECO:0000250" key="1"/>
<evidence type="ECO:0000255" key="2">
    <source>
        <dbReference type="HAMAP-Rule" id="MF_00103"/>
    </source>
</evidence>
<feature type="initiator methionine" description="Removed" evidence="1">
    <location>
        <position position="1"/>
    </location>
</feature>
<feature type="chain" id="PRO_1000075691" description="Formamidopyrimidine-DNA glycosylase">
    <location>
        <begin position="2"/>
        <end position="284"/>
    </location>
</feature>
<feature type="zinc finger region" description="FPG-type" evidence="2">
    <location>
        <begin position="248"/>
        <end position="282"/>
    </location>
</feature>
<feature type="active site" description="Schiff-base intermediate with DNA" evidence="2">
    <location>
        <position position="2"/>
    </location>
</feature>
<feature type="active site" description="Proton donor" evidence="2">
    <location>
        <position position="3"/>
    </location>
</feature>
<feature type="active site" description="Proton donor; for beta-elimination activity" evidence="2">
    <location>
        <position position="60"/>
    </location>
</feature>
<feature type="active site" description="Proton donor; for delta-elimination activity" evidence="2">
    <location>
        <position position="272"/>
    </location>
</feature>
<feature type="binding site" evidence="2">
    <location>
        <position position="99"/>
    </location>
    <ligand>
        <name>DNA</name>
        <dbReference type="ChEBI" id="CHEBI:16991"/>
    </ligand>
</feature>
<feature type="binding site" evidence="2">
    <location>
        <position position="118"/>
    </location>
    <ligand>
        <name>DNA</name>
        <dbReference type="ChEBI" id="CHEBI:16991"/>
    </ligand>
</feature>
<feature type="binding site" evidence="2">
    <location>
        <position position="163"/>
    </location>
    <ligand>
        <name>DNA</name>
        <dbReference type="ChEBI" id="CHEBI:16991"/>
    </ligand>
</feature>
<sequence length="284" mass="32098">MPELPEVETVRLGLEKVTVGMQIMGGEVLYPRTIAHPQSPQVFIQGLQDATFLSWMRRGKYLLSQLSFSTQQPSGWLGVHLRMTGQLLWVAQDEPVQKHTRVRLFFVNNRELRFVDQRTFGQMWWVAPTEDPKQVISGLQKLGPEPFSEEFSVDYFWESLQGRKRSIKSALLDQALVAGVGNIYADEALFMSEIRPTTACHQLQTEQVQRLRTAIIEVLSTSIGAGGTTFSDFRDLKGVNGNYGGMAWVYGRQGQPCRTCGQTIERIKLVGRSTHFCPQCQPES</sequence>
<comment type="function">
    <text evidence="2">Involved in base excision repair of DNA damaged by oxidation or by mutagenic agents. Acts as a DNA glycosylase that recognizes and removes damaged bases. Has a preference for oxidized purines, such as 7,8-dihydro-8-oxoguanine (8-oxoG). Has AP (apurinic/apyrimidinic) lyase activity and introduces nicks in the DNA strand. Cleaves the DNA backbone by beta-delta elimination to generate a single-strand break at the site of the removed base with both 3'- and 5'-phosphates.</text>
</comment>
<comment type="catalytic activity">
    <reaction evidence="2">
        <text>Hydrolysis of DNA containing ring-opened 7-methylguanine residues, releasing 2,6-diamino-4-hydroxy-5-(N-methyl)formamidopyrimidine.</text>
        <dbReference type="EC" id="3.2.2.23"/>
    </reaction>
</comment>
<comment type="catalytic activity">
    <reaction evidence="2">
        <text>2'-deoxyribonucleotide-(2'-deoxyribose 5'-phosphate)-2'-deoxyribonucleotide-DNA = a 3'-end 2'-deoxyribonucleotide-(2,3-dehydro-2,3-deoxyribose 5'-phosphate)-DNA + a 5'-end 5'-phospho-2'-deoxyribonucleoside-DNA + H(+)</text>
        <dbReference type="Rhea" id="RHEA:66592"/>
        <dbReference type="Rhea" id="RHEA-COMP:13180"/>
        <dbReference type="Rhea" id="RHEA-COMP:16897"/>
        <dbReference type="Rhea" id="RHEA-COMP:17067"/>
        <dbReference type="ChEBI" id="CHEBI:15378"/>
        <dbReference type="ChEBI" id="CHEBI:136412"/>
        <dbReference type="ChEBI" id="CHEBI:157695"/>
        <dbReference type="ChEBI" id="CHEBI:167181"/>
        <dbReference type="EC" id="4.2.99.18"/>
    </reaction>
</comment>
<comment type="cofactor">
    <cofactor evidence="2">
        <name>Zn(2+)</name>
        <dbReference type="ChEBI" id="CHEBI:29105"/>
    </cofactor>
    <text evidence="2">Binds 1 zinc ion per subunit.</text>
</comment>
<comment type="subunit">
    <text evidence="2">Monomer.</text>
</comment>
<comment type="similarity">
    <text evidence="2">Belongs to the FPG family.</text>
</comment>
<proteinExistence type="inferred from homology"/>